<proteinExistence type="inferred from homology"/>
<gene>
    <name type="ordered locus">BCQ_4170</name>
</gene>
<dbReference type="EC" id="3.1.-.-" evidence="1"/>
<dbReference type="EMBL" id="CP000227">
    <property type="protein sequence ID" value="ACM14597.1"/>
    <property type="molecule type" value="Genomic_DNA"/>
</dbReference>
<dbReference type="SMR" id="B9IYF1"/>
<dbReference type="KEGG" id="bcq:BCQ_4170"/>
<dbReference type="HOGENOM" id="CLU_098240_2_0_9"/>
<dbReference type="Proteomes" id="UP000000441">
    <property type="component" value="Chromosome"/>
</dbReference>
<dbReference type="GO" id="GO:0005829">
    <property type="term" value="C:cytosol"/>
    <property type="evidence" value="ECO:0007669"/>
    <property type="project" value="TreeGrafter"/>
</dbReference>
<dbReference type="GO" id="GO:0004518">
    <property type="term" value="F:nuclease activity"/>
    <property type="evidence" value="ECO:0007669"/>
    <property type="project" value="UniProtKB-KW"/>
</dbReference>
<dbReference type="GO" id="GO:0000967">
    <property type="term" value="P:rRNA 5'-end processing"/>
    <property type="evidence" value="ECO:0007669"/>
    <property type="project" value="UniProtKB-UniRule"/>
</dbReference>
<dbReference type="CDD" id="cd16964">
    <property type="entry name" value="YqgF"/>
    <property type="match status" value="1"/>
</dbReference>
<dbReference type="FunFam" id="3.30.420.140:FF:000003">
    <property type="entry name" value="Putative pre-16S rRNA nuclease"/>
    <property type="match status" value="1"/>
</dbReference>
<dbReference type="Gene3D" id="3.30.420.140">
    <property type="entry name" value="YqgF/RNase H-like domain"/>
    <property type="match status" value="1"/>
</dbReference>
<dbReference type="HAMAP" id="MF_00651">
    <property type="entry name" value="Nuclease_YqgF"/>
    <property type="match status" value="1"/>
</dbReference>
<dbReference type="InterPro" id="IPR012337">
    <property type="entry name" value="RNaseH-like_sf"/>
</dbReference>
<dbReference type="InterPro" id="IPR005227">
    <property type="entry name" value="YqgF"/>
</dbReference>
<dbReference type="InterPro" id="IPR006641">
    <property type="entry name" value="YqgF/RNaseH-like_dom"/>
</dbReference>
<dbReference type="InterPro" id="IPR037027">
    <property type="entry name" value="YqgF/RNaseH-like_dom_sf"/>
</dbReference>
<dbReference type="NCBIfam" id="TIGR00250">
    <property type="entry name" value="RNAse_H_YqgF"/>
    <property type="match status" value="1"/>
</dbReference>
<dbReference type="PANTHER" id="PTHR33317">
    <property type="entry name" value="POLYNUCLEOTIDYL TRANSFERASE, RIBONUCLEASE H-LIKE SUPERFAMILY PROTEIN"/>
    <property type="match status" value="1"/>
</dbReference>
<dbReference type="PANTHER" id="PTHR33317:SF4">
    <property type="entry name" value="POLYNUCLEOTIDYL TRANSFERASE, RIBONUCLEASE H-LIKE SUPERFAMILY PROTEIN"/>
    <property type="match status" value="1"/>
</dbReference>
<dbReference type="Pfam" id="PF03652">
    <property type="entry name" value="RuvX"/>
    <property type="match status" value="1"/>
</dbReference>
<dbReference type="SMART" id="SM00732">
    <property type="entry name" value="YqgFc"/>
    <property type="match status" value="1"/>
</dbReference>
<dbReference type="SUPFAM" id="SSF53098">
    <property type="entry name" value="Ribonuclease H-like"/>
    <property type="match status" value="1"/>
</dbReference>
<feature type="chain" id="PRO_1000147462" description="Putative pre-16S rRNA nuclease">
    <location>
        <begin position="1"/>
        <end position="137"/>
    </location>
</feature>
<sequence>MRILGLDVGTKTVGVAISDEMGWTAQGLETIKINEERGQFGFDRISELVKQYDVDKIVVGLPKNMNGTIGPRGEACQQFAENLRELLQLDVVMWDERLSTMAAERLLISADVSRKKRKQVIDKMAAVVILQGFLDRK</sequence>
<organism>
    <name type="scientific">Bacillus cereus (strain Q1)</name>
    <dbReference type="NCBI Taxonomy" id="361100"/>
    <lineage>
        <taxon>Bacteria</taxon>
        <taxon>Bacillati</taxon>
        <taxon>Bacillota</taxon>
        <taxon>Bacilli</taxon>
        <taxon>Bacillales</taxon>
        <taxon>Bacillaceae</taxon>
        <taxon>Bacillus</taxon>
        <taxon>Bacillus cereus group</taxon>
    </lineage>
</organism>
<reference key="1">
    <citation type="journal article" date="2009" name="J. Bacteriol.">
        <title>Complete genome sequence of the extremophilic Bacillus cereus strain Q1 with industrial applications.</title>
        <authorList>
            <person name="Xiong Z."/>
            <person name="Jiang Y."/>
            <person name="Qi D."/>
            <person name="Lu H."/>
            <person name="Yang F."/>
            <person name="Yang J."/>
            <person name="Chen L."/>
            <person name="Sun L."/>
            <person name="Xu X."/>
            <person name="Xue Y."/>
            <person name="Zhu Y."/>
            <person name="Jin Q."/>
        </authorList>
    </citation>
    <scope>NUCLEOTIDE SEQUENCE [LARGE SCALE GENOMIC DNA]</scope>
    <source>
        <strain>Q1</strain>
    </source>
</reference>
<protein>
    <recommendedName>
        <fullName evidence="1">Putative pre-16S rRNA nuclease</fullName>
        <ecNumber evidence="1">3.1.-.-</ecNumber>
    </recommendedName>
</protein>
<name>YQGF_BACCQ</name>
<comment type="function">
    <text evidence="1">Could be a nuclease involved in processing of the 5'-end of pre-16S rRNA.</text>
</comment>
<comment type="subcellular location">
    <subcellularLocation>
        <location evidence="1">Cytoplasm</location>
    </subcellularLocation>
</comment>
<comment type="similarity">
    <text evidence="1">Belongs to the YqgF nuclease family.</text>
</comment>
<keyword id="KW-0963">Cytoplasm</keyword>
<keyword id="KW-0378">Hydrolase</keyword>
<keyword id="KW-0540">Nuclease</keyword>
<keyword id="KW-0690">Ribosome biogenesis</keyword>
<evidence type="ECO:0000255" key="1">
    <source>
        <dbReference type="HAMAP-Rule" id="MF_00651"/>
    </source>
</evidence>
<accession>B9IYF1</accession>